<keyword id="KW-1015">Disulfide bond</keyword>
<keyword id="KW-0378">Hydrolase</keyword>
<keyword id="KW-0964">Secreted</keyword>
<keyword id="KW-0719">Serine esterase</keyword>
<keyword id="KW-0732">Signal</keyword>
<keyword id="KW-0843">Virulence</keyword>
<protein>
    <recommendedName>
        <fullName>Cutinase 2</fullName>
        <ecNumber evidence="4 5">3.1.1.74</ecNumber>
    </recommendedName>
    <alternativeName>
        <fullName>Cutin hydrolase 2</fullName>
    </alternativeName>
</protein>
<accession>Q96UT0</accession>
<dbReference type="EC" id="3.1.1.74" evidence="4 5"/>
<dbReference type="EMBL" id="AF417004">
    <property type="protein sequence ID" value="AAL18696.1"/>
    <property type="molecule type" value="Genomic_DNA"/>
</dbReference>
<dbReference type="SMR" id="Q96UT0"/>
<dbReference type="ESTHER" id="fusso-CUT2">
    <property type="family name" value="Cutinase"/>
</dbReference>
<dbReference type="VEuPathDB" id="FungiDB:NECHADRAFT_81019"/>
<dbReference type="GO" id="GO:0005576">
    <property type="term" value="C:extracellular region"/>
    <property type="evidence" value="ECO:0007669"/>
    <property type="project" value="UniProtKB-SubCell"/>
</dbReference>
<dbReference type="GO" id="GO:0050525">
    <property type="term" value="F:cutinase activity"/>
    <property type="evidence" value="ECO:0000250"/>
    <property type="project" value="UniProtKB"/>
</dbReference>
<dbReference type="GO" id="GO:0016052">
    <property type="term" value="P:carbohydrate catabolic process"/>
    <property type="evidence" value="ECO:0007669"/>
    <property type="project" value="TreeGrafter"/>
</dbReference>
<dbReference type="FunFam" id="3.40.50.1820:FF:000235">
    <property type="entry name" value="Cutinase 1"/>
    <property type="match status" value="1"/>
</dbReference>
<dbReference type="Gene3D" id="3.40.50.1820">
    <property type="entry name" value="alpha/beta hydrolase"/>
    <property type="match status" value="1"/>
</dbReference>
<dbReference type="InterPro" id="IPR029058">
    <property type="entry name" value="AB_hydrolase_fold"/>
</dbReference>
<dbReference type="InterPro" id="IPR000675">
    <property type="entry name" value="Cutinase/axe"/>
</dbReference>
<dbReference type="InterPro" id="IPR043580">
    <property type="entry name" value="CUTINASE_1"/>
</dbReference>
<dbReference type="InterPro" id="IPR043579">
    <property type="entry name" value="CUTINASE_2"/>
</dbReference>
<dbReference type="InterPro" id="IPR011150">
    <property type="entry name" value="Cutinase_monf"/>
</dbReference>
<dbReference type="PANTHER" id="PTHR48250:SF3">
    <property type="entry name" value="CUTINASE 1-RELATED"/>
    <property type="match status" value="1"/>
</dbReference>
<dbReference type="PANTHER" id="PTHR48250">
    <property type="entry name" value="CUTINASE 2-RELATED"/>
    <property type="match status" value="1"/>
</dbReference>
<dbReference type="Pfam" id="PF01083">
    <property type="entry name" value="Cutinase"/>
    <property type="match status" value="1"/>
</dbReference>
<dbReference type="PRINTS" id="PR00129">
    <property type="entry name" value="CUTINASE"/>
</dbReference>
<dbReference type="SMART" id="SM01110">
    <property type="entry name" value="Cutinase"/>
    <property type="match status" value="1"/>
</dbReference>
<dbReference type="SUPFAM" id="SSF53474">
    <property type="entry name" value="alpha/beta-Hydrolases"/>
    <property type="match status" value="1"/>
</dbReference>
<dbReference type="PROSITE" id="PS00155">
    <property type="entry name" value="CUTINASE_1"/>
    <property type="match status" value="1"/>
</dbReference>
<dbReference type="PROSITE" id="PS00931">
    <property type="entry name" value="CUTINASE_2"/>
    <property type="match status" value="1"/>
</dbReference>
<reference key="1">
    <citation type="journal article" date="2002" name="J. Biol. Chem.">
        <title>Regulation of constitutively expressed and induced cutinase genes by different zinc finger transcription factors in Fusarium solani f. sp. pisi (Nectria haematococca).</title>
        <authorList>
            <person name="Li D."/>
            <person name="Sirakova T."/>
            <person name="Rogers L."/>
            <person name="Ettinger W.F."/>
            <person name="Kolattukudy P.E."/>
        </authorList>
    </citation>
    <scope>NUCLEOTIDE SEQUENCE [GENOMIC DNA]</scope>
    <source>
        <strain>T-8</strain>
    </source>
</reference>
<sequence>MKFFALTTLLAATASALPTSHPVQELEARQLGGGTTRNDLTNGNSASCADVIFIYARGSTETGNLGTLGPSIASKLESAFGRDGVWIQGVGGAYRATLGDNSLPRGTSSAAIREMLGLFQQANTKCPDATLIAGGYSQGAALGAASVEDLDSAIRDKIAGTVLFGYTKNLQNHGRIPNFPADRTKVFCNTGDLVCTGSLIIAAPHLTYGPDARGPAPEFLIEKVRAVRGSA</sequence>
<evidence type="ECO:0000250" key="1">
    <source>
        <dbReference type="UniProtKB" id="P00590"/>
    </source>
</evidence>
<evidence type="ECO:0000250" key="2">
    <source>
        <dbReference type="UniProtKB" id="P11373"/>
    </source>
</evidence>
<evidence type="ECO:0000255" key="3"/>
<evidence type="ECO:0000255" key="4">
    <source>
        <dbReference type="PROSITE-ProRule" id="PRU10108"/>
    </source>
</evidence>
<evidence type="ECO:0000255" key="5">
    <source>
        <dbReference type="PROSITE-ProRule" id="PRU10109"/>
    </source>
</evidence>
<evidence type="ECO:0000305" key="6"/>
<comment type="function">
    <text evidence="1">Catalyzes the hydrolysis of complex carboxylic polyesters found in the cell wall of plants (By similarity). Degrades cutin, a macromolecule that forms the structure of the plant cuticle (By similarity). Allows pathogenic fungi to penetrate through the cuticular barrier into the host plant during the initial stage of fungal infection (By similarity).</text>
</comment>
<comment type="catalytic activity">
    <reaction evidence="4 5">
        <text>cutin + H2O = cutin monomers.</text>
        <dbReference type="EC" id="3.1.1.74"/>
    </reaction>
</comment>
<comment type="subcellular location">
    <subcellularLocation>
        <location evidence="2">Secreted</location>
    </subcellularLocation>
</comment>
<comment type="PTM">
    <text evidence="2">The 2 disulfide bonds play a critical role in holding the catalytic residues in juxta-position; reduction of the disulfide bridges results in the complete inactivation of the enzyme.</text>
</comment>
<comment type="similarity">
    <text evidence="6">Belongs to the cutinase family.</text>
</comment>
<feature type="signal peptide" evidence="3">
    <location>
        <begin position="1"/>
        <end position="16"/>
    </location>
</feature>
<feature type="chain" id="PRO_0000006441" description="Cutinase 2">
    <location>
        <begin position="17"/>
        <end position="231"/>
    </location>
</feature>
<feature type="active site" description="Nucleophile" evidence="1">
    <location>
        <position position="137"/>
    </location>
</feature>
<feature type="active site" evidence="1">
    <location>
        <position position="192"/>
    </location>
</feature>
<feature type="active site" description="Proton donor/acceptor" evidence="1">
    <location>
        <position position="205"/>
    </location>
</feature>
<feature type="site" description="Transition state stabilizer" evidence="1">
    <location>
        <position position="59"/>
    </location>
</feature>
<feature type="site" description="Transition state stabilizer" evidence="1">
    <location>
        <position position="138"/>
    </location>
</feature>
<feature type="disulfide bond" evidence="1">
    <location>
        <begin position="48"/>
        <end position="126"/>
    </location>
</feature>
<feature type="disulfide bond" evidence="1">
    <location>
        <begin position="188"/>
        <end position="195"/>
    </location>
</feature>
<organism>
    <name type="scientific">Fusarium vanettenii</name>
    <name type="common">Neocosmospora pisi</name>
    <dbReference type="NCBI Taxonomy" id="2747968"/>
    <lineage>
        <taxon>Eukaryota</taxon>
        <taxon>Fungi</taxon>
        <taxon>Dikarya</taxon>
        <taxon>Ascomycota</taxon>
        <taxon>Pezizomycotina</taxon>
        <taxon>Sordariomycetes</taxon>
        <taxon>Hypocreomycetidae</taxon>
        <taxon>Hypocreales</taxon>
        <taxon>Nectriaceae</taxon>
        <taxon>Fusarium</taxon>
        <taxon>Fusarium solani species complex</taxon>
    </lineage>
</organism>
<name>CUTI2_FUSVN</name>
<gene>
    <name type="primary">CUT2</name>
</gene>
<proteinExistence type="inferred from homology"/>